<name>ILVC_STRPN</name>
<protein>
    <recommendedName>
        <fullName evidence="1">Ketol-acid reductoisomerase (NADP(+))</fullName>
        <shortName evidence="1">KARI</shortName>
        <ecNumber evidence="1">1.1.1.86</ecNumber>
    </recommendedName>
    <alternativeName>
        <fullName evidence="1">Acetohydroxy-acid isomeroreductase</fullName>
        <shortName evidence="1">AHIR</shortName>
    </alternativeName>
    <alternativeName>
        <fullName evidence="1">Alpha-keto-beta-hydroxylacyl reductoisomerase</fullName>
    </alternativeName>
    <alternativeName>
        <fullName evidence="1">Ketol-acid reductoisomerase type 1</fullName>
    </alternativeName>
    <alternativeName>
        <fullName evidence="1">Ketol-acid reductoisomerase type I</fullName>
    </alternativeName>
</protein>
<keyword id="KW-0028">Amino-acid biosynthesis</keyword>
<keyword id="KW-0100">Branched-chain amino acid biosynthesis</keyword>
<keyword id="KW-0460">Magnesium</keyword>
<keyword id="KW-0479">Metal-binding</keyword>
<keyword id="KW-0521">NADP</keyword>
<keyword id="KW-0560">Oxidoreductase</keyword>
<keyword id="KW-1185">Reference proteome</keyword>
<accession>Q97SD7</accession>
<gene>
    <name evidence="1" type="primary">ilvC</name>
    <name type="ordered locus">SP_0447</name>
</gene>
<proteinExistence type="inferred from homology"/>
<dbReference type="EC" id="1.1.1.86" evidence="1"/>
<dbReference type="EMBL" id="AE005672">
    <property type="protein sequence ID" value="AAK74608.1"/>
    <property type="status" value="ALT_INIT"/>
    <property type="molecule type" value="Genomic_DNA"/>
</dbReference>
<dbReference type="PIR" id="G95051">
    <property type="entry name" value="G95051"/>
</dbReference>
<dbReference type="RefSeq" id="WP_000218054.1">
    <property type="nucleotide sequence ID" value="NZ_CP155539.1"/>
</dbReference>
<dbReference type="SMR" id="Q97SD7"/>
<dbReference type="PaxDb" id="170187-SP_0447"/>
<dbReference type="EnsemblBacteria" id="AAK74608">
    <property type="protein sequence ID" value="AAK74608"/>
    <property type="gene ID" value="SP_0447"/>
</dbReference>
<dbReference type="GeneID" id="45652102"/>
<dbReference type="KEGG" id="spn:SP_0447"/>
<dbReference type="eggNOG" id="COG0059">
    <property type="taxonomic scope" value="Bacteria"/>
</dbReference>
<dbReference type="PhylomeDB" id="Q97SD7"/>
<dbReference type="BioCyc" id="SPNE170187:G1FZB-462-MONOMER"/>
<dbReference type="UniPathway" id="UPA00047">
    <property type="reaction ID" value="UER00056"/>
</dbReference>
<dbReference type="UniPathway" id="UPA00049">
    <property type="reaction ID" value="UER00060"/>
</dbReference>
<dbReference type="Proteomes" id="UP000000585">
    <property type="component" value="Chromosome"/>
</dbReference>
<dbReference type="GO" id="GO:0005829">
    <property type="term" value="C:cytosol"/>
    <property type="evidence" value="ECO:0007669"/>
    <property type="project" value="TreeGrafter"/>
</dbReference>
<dbReference type="GO" id="GO:0004455">
    <property type="term" value="F:ketol-acid reductoisomerase activity"/>
    <property type="evidence" value="ECO:0007669"/>
    <property type="project" value="UniProtKB-UniRule"/>
</dbReference>
<dbReference type="GO" id="GO:0000287">
    <property type="term" value="F:magnesium ion binding"/>
    <property type="evidence" value="ECO:0007669"/>
    <property type="project" value="UniProtKB-UniRule"/>
</dbReference>
<dbReference type="GO" id="GO:0050661">
    <property type="term" value="F:NADP binding"/>
    <property type="evidence" value="ECO:0007669"/>
    <property type="project" value="InterPro"/>
</dbReference>
<dbReference type="GO" id="GO:0009097">
    <property type="term" value="P:isoleucine biosynthetic process"/>
    <property type="evidence" value="ECO:0007669"/>
    <property type="project" value="UniProtKB-UniRule"/>
</dbReference>
<dbReference type="GO" id="GO:0009099">
    <property type="term" value="P:L-valine biosynthetic process"/>
    <property type="evidence" value="ECO:0007669"/>
    <property type="project" value="UniProtKB-UniRule"/>
</dbReference>
<dbReference type="FunFam" id="3.40.50.720:FF:000023">
    <property type="entry name" value="Ketol-acid reductoisomerase (NADP(+))"/>
    <property type="match status" value="1"/>
</dbReference>
<dbReference type="Gene3D" id="6.10.240.10">
    <property type="match status" value="1"/>
</dbReference>
<dbReference type="Gene3D" id="3.40.50.720">
    <property type="entry name" value="NAD(P)-binding Rossmann-like Domain"/>
    <property type="match status" value="1"/>
</dbReference>
<dbReference type="HAMAP" id="MF_00435">
    <property type="entry name" value="IlvC"/>
    <property type="match status" value="1"/>
</dbReference>
<dbReference type="InterPro" id="IPR008927">
    <property type="entry name" value="6-PGluconate_DH-like_C_sf"/>
</dbReference>
<dbReference type="InterPro" id="IPR013023">
    <property type="entry name" value="KARI"/>
</dbReference>
<dbReference type="InterPro" id="IPR000506">
    <property type="entry name" value="KARI_C"/>
</dbReference>
<dbReference type="InterPro" id="IPR013116">
    <property type="entry name" value="KARI_N"/>
</dbReference>
<dbReference type="InterPro" id="IPR014359">
    <property type="entry name" value="KARI_prok"/>
</dbReference>
<dbReference type="InterPro" id="IPR036291">
    <property type="entry name" value="NAD(P)-bd_dom_sf"/>
</dbReference>
<dbReference type="NCBIfam" id="TIGR00465">
    <property type="entry name" value="ilvC"/>
    <property type="match status" value="1"/>
</dbReference>
<dbReference type="NCBIfam" id="NF004017">
    <property type="entry name" value="PRK05479.1"/>
    <property type="match status" value="1"/>
</dbReference>
<dbReference type="NCBIfam" id="NF009940">
    <property type="entry name" value="PRK13403.1"/>
    <property type="match status" value="1"/>
</dbReference>
<dbReference type="PANTHER" id="PTHR21371">
    <property type="entry name" value="KETOL-ACID REDUCTOISOMERASE, MITOCHONDRIAL"/>
    <property type="match status" value="1"/>
</dbReference>
<dbReference type="PANTHER" id="PTHR21371:SF1">
    <property type="entry name" value="KETOL-ACID REDUCTOISOMERASE, MITOCHONDRIAL"/>
    <property type="match status" value="1"/>
</dbReference>
<dbReference type="Pfam" id="PF01450">
    <property type="entry name" value="KARI_C"/>
    <property type="match status" value="1"/>
</dbReference>
<dbReference type="Pfam" id="PF07991">
    <property type="entry name" value="KARI_N"/>
    <property type="match status" value="1"/>
</dbReference>
<dbReference type="PIRSF" id="PIRSF000116">
    <property type="entry name" value="IlvC_gammaproteo"/>
    <property type="match status" value="1"/>
</dbReference>
<dbReference type="SUPFAM" id="SSF48179">
    <property type="entry name" value="6-phosphogluconate dehydrogenase C-terminal domain-like"/>
    <property type="match status" value="1"/>
</dbReference>
<dbReference type="SUPFAM" id="SSF51735">
    <property type="entry name" value="NAD(P)-binding Rossmann-fold domains"/>
    <property type="match status" value="1"/>
</dbReference>
<dbReference type="PROSITE" id="PS51851">
    <property type="entry name" value="KARI_C"/>
    <property type="match status" value="1"/>
</dbReference>
<dbReference type="PROSITE" id="PS51850">
    <property type="entry name" value="KARI_N"/>
    <property type="match status" value="1"/>
</dbReference>
<comment type="function">
    <text evidence="1">Involved in the biosynthesis of branched-chain amino acids (BCAA). Catalyzes an alkyl-migration followed by a ketol-acid reduction of (S)-2-acetolactate (S2AL) to yield (R)-2,3-dihydroxy-isovalerate. In the isomerase reaction, S2AL is rearranged via a Mg-dependent methyl migration to produce 3-hydroxy-3-methyl-2-ketobutyrate (HMKB). In the reductase reaction, this 2-ketoacid undergoes a metal-dependent reduction by NADPH to yield (R)-2,3-dihydroxy-isovalerate.</text>
</comment>
<comment type="catalytic activity">
    <reaction evidence="1">
        <text>(2R)-2,3-dihydroxy-3-methylbutanoate + NADP(+) = (2S)-2-acetolactate + NADPH + H(+)</text>
        <dbReference type="Rhea" id="RHEA:22068"/>
        <dbReference type="ChEBI" id="CHEBI:15378"/>
        <dbReference type="ChEBI" id="CHEBI:49072"/>
        <dbReference type="ChEBI" id="CHEBI:57783"/>
        <dbReference type="ChEBI" id="CHEBI:58349"/>
        <dbReference type="ChEBI" id="CHEBI:58476"/>
        <dbReference type="EC" id="1.1.1.86"/>
    </reaction>
</comment>
<comment type="catalytic activity">
    <reaction evidence="1">
        <text>(2R,3R)-2,3-dihydroxy-3-methylpentanoate + NADP(+) = (S)-2-ethyl-2-hydroxy-3-oxobutanoate + NADPH + H(+)</text>
        <dbReference type="Rhea" id="RHEA:13493"/>
        <dbReference type="ChEBI" id="CHEBI:15378"/>
        <dbReference type="ChEBI" id="CHEBI:49256"/>
        <dbReference type="ChEBI" id="CHEBI:49258"/>
        <dbReference type="ChEBI" id="CHEBI:57783"/>
        <dbReference type="ChEBI" id="CHEBI:58349"/>
        <dbReference type="EC" id="1.1.1.86"/>
    </reaction>
</comment>
<comment type="cofactor">
    <cofactor evidence="1">
        <name>Mg(2+)</name>
        <dbReference type="ChEBI" id="CHEBI:18420"/>
    </cofactor>
    <text evidence="1">Binds 2 magnesium ions per subunit.</text>
</comment>
<comment type="pathway">
    <text evidence="1">Amino-acid biosynthesis; L-isoleucine biosynthesis; L-isoleucine from 2-oxobutanoate: step 2/4.</text>
</comment>
<comment type="pathway">
    <text evidence="1">Amino-acid biosynthesis; L-valine biosynthesis; L-valine from pyruvate: step 2/4.</text>
</comment>
<comment type="similarity">
    <text evidence="1">Belongs to the ketol-acid reductoisomerase family.</text>
</comment>
<comment type="sequence caution" evidence="4">
    <conflict type="erroneous initiation">
        <sequence resource="EMBL-CDS" id="AAK74608"/>
    </conflict>
</comment>
<evidence type="ECO:0000255" key="1">
    <source>
        <dbReference type="HAMAP-Rule" id="MF_00435"/>
    </source>
</evidence>
<evidence type="ECO:0000255" key="2">
    <source>
        <dbReference type="PROSITE-ProRule" id="PRU01197"/>
    </source>
</evidence>
<evidence type="ECO:0000255" key="3">
    <source>
        <dbReference type="PROSITE-ProRule" id="PRU01198"/>
    </source>
</evidence>
<evidence type="ECO:0000305" key="4"/>
<organism>
    <name type="scientific">Streptococcus pneumoniae serotype 4 (strain ATCC BAA-334 / TIGR4)</name>
    <dbReference type="NCBI Taxonomy" id="170187"/>
    <lineage>
        <taxon>Bacteria</taxon>
        <taxon>Bacillati</taxon>
        <taxon>Bacillota</taxon>
        <taxon>Bacilli</taxon>
        <taxon>Lactobacillales</taxon>
        <taxon>Streptococcaceae</taxon>
        <taxon>Streptococcus</taxon>
    </lineage>
</organism>
<feature type="chain" id="PRO_0000151367" description="Ketol-acid reductoisomerase (NADP(+))">
    <location>
        <begin position="1"/>
        <end position="340"/>
    </location>
</feature>
<feature type="domain" description="KARI N-terminal Rossmann" evidence="2">
    <location>
        <begin position="3"/>
        <end position="182"/>
    </location>
</feature>
<feature type="domain" description="KARI C-terminal knotted" evidence="3">
    <location>
        <begin position="183"/>
        <end position="328"/>
    </location>
</feature>
<feature type="active site" evidence="1">
    <location>
        <position position="108"/>
    </location>
</feature>
<feature type="binding site" evidence="1">
    <location>
        <begin position="26"/>
        <end position="29"/>
    </location>
    <ligand>
        <name>NADP(+)</name>
        <dbReference type="ChEBI" id="CHEBI:58349"/>
    </ligand>
</feature>
<feature type="binding site" evidence="1">
    <location>
        <position position="49"/>
    </location>
    <ligand>
        <name>NADP(+)</name>
        <dbReference type="ChEBI" id="CHEBI:58349"/>
    </ligand>
</feature>
<feature type="binding site" evidence="1">
    <location>
        <position position="53"/>
    </location>
    <ligand>
        <name>NADP(+)</name>
        <dbReference type="ChEBI" id="CHEBI:58349"/>
    </ligand>
</feature>
<feature type="binding site" evidence="1">
    <location>
        <begin position="83"/>
        <end position="86"/>
    </location>
    <ligand>
        <name>NADP(+)</name>
        <dbReference type="ChEBI" id="CHEBI:58349"/>
    </ligand>
</feature>
<feature type="binding site" evidence="1">
    <location>
        <position position="134"/>
    </location>
    <ligand>
        <name>NADP(+)</name>
        <dbReference type="ChEBI" id="CHEBI:58349"/>
    </ligand>
</feature>
<feature type="binding site" evidence="1">
    <location>
        <position position="191"/>
    </location>
    <ligand>
        <name>Mg(2+)</name>
        <dbReference type="ChEBI" id="CHEBI:18420"/>
        <label>1</label>
    </ligand>
</feature>
<feature type="binding site" evidence="1">
    <location>
        <position position="191"/>
    </location>
    <ligand>
        <name>Mg(2+)</name>
        <dbReference type="ChEBI" id="CHEBI:18420"/>
        <label>2</label>
    </ligand>
</feature>
<feature type="binding site" evidence="1">
    <location>
        <position position="195"/>
    </location>
    <ligand>
        <name>Mg(2+)</name>
        <dbReference type="ChEBI" id="CHEBI:18420"/>
        <label>1</label>
    </ligand>
</feature>
<feature type="binding site" evidence="1">
    <location>
        <position position="227"/>
    </location>
    <ligand>
        <name>Mg(2+)</name>
        <dbReference type="ChEBI" id="CHEBI:18420"/>
        <label>2</label>
    </ligand>
</feature>
<feature type="binding site" evidence="1">
    <location>
        <position position="231"/>
    </location>
    <ligand>
        <name>Mg(2+)</name>
        <dbReference type="ChEBI" id="CHEBI:18420"/>
        <label>2</label>
    </ligand>
</feature>
<feature type="binding site" evidence="1">
    <location>
        <position position="252"/>
    </location>
    <ligand>
        <name>substrate</name>
    </ligand>
</feature>
<sequence>MTVQMEYEKDVKVAALDGKKIAVIGYGSQGHAHAQNLRDSGRDVIIGVRPGKSFDKAKEDGFDTYTVAEATKLADVIMILAPDEIQQELYEAEIAPNLEAGNAVGFAHGFNIHFEFIKVPADVDVFMCAPKGPGHLVRRTYEEGFGVPALYAVYQDATGNAKNIAMDWCKGVGAARVGLLETTYKEETEEDLFGEQAVLCGGLTALIEAGFEVLTEAGYAPELAYFEVLHEMKLIVDLIYEGGFKKMRQSISNTAEYGDYVSGPRVITEQVKENMKAVLADIQNGKFANDFVNDYKAGRPKLTAYREQAANLEIEKVGAELRKAMPFVGKNDDDAFKIYN</sequence>
<reference key="1">
    <citation type="journal article" date="2001" name="Science">
        <title>Complete genome sequence of a virulent isolate of Streptococcus pneumoniae.</title>
        <authorList>
            <person name="Tettelin H."/>
            <person name="Nelson K.E."/>
            <person name="Paulsen I.T."/>
            <person name="Eisen J.A."/>
            <person name="Read T.D."/>
            <person name="Peterson S.N."/>
            <person name="Heidelberg J.F."/>
            <person name="DeBoy R.T."/>
            <person name="Haft D.H."/>
            <person name="Dodson R.J."/>
            <person name="Durkin A.S."/>
            <person name="Gwinn M.L."/>
            <person name="Kolonay J.F."/>
            <person name="Nelson W.C."/>
            <person name="Peterson J.D."/>
            <person name="Umayam L.A."/>
            <person name="White O."/>
            <person name="Salzberg S.L."/>
            <person name="Lewis M.R."/>
            <person name="Radune D."/>
            <person name="Holtzapple E.K."/>
            <person name="Khouri H.M."/>
            <person name="Wolf A.M."/>
            <person name="Utterback T.R."/>
            <person name="Hansen C.L."/>
            <person name="McDonald L.A."/>
            <person name="Feldblyum T.V."/>
            <person name="Angiuoli S.V."/>
            <person name="Dickinson T."/>
            <person name="Hickey E.K."/>
            <person name="Holt I.E."/>
            <person name="Loftus B.J."/>
            <person name="Yang F."/>
            <person name="Smith H.O."/>
            <person name="Venter J.C."/>
            <person name="Dougherty B.A."/>
            <person name="Morrison D.A."/>
            <person name="Hollingshead S.K."/>
            <person name="Fraser C.M."/>
        </authorList>
    </citation>
    <scope>NUCLEOTIDE SEQUENCE [LARGE SCALE GENOMIC DNA]</scope>
    <source>
        <strain>ATCC BAA-334 / TIGR4</strain>
    </source>
</reference>